<reference key="1">
    <citation type="journal article" date="2006" name="Genomics">
        <title>Diversity and evolution of conotoxins based on gene expression profiling of Conus litteratus.</title>
        <authorList>
            <person name="Pi C."/>
            <person name="Liu J."/>
            <person name="Peng C."/>
            <person name="Liu Y."/>
            <person name="Jiang X."/>
            <person name="Zhao Y."/>
            <person name="Tang S."/>
            <person name="Wang L."/>
            <person name="Dong M."/>
            <person name="Chen S."/>
            <person name="Xu A."/>
        </authorList>
    </citation>
    <scope>NUCLEOTIDE SEQUENCE [MRNA]</scope>
    <source>
        <tissue>Venom duct</tissue>
    </source>
</reference>
<sequence>MGMRMMFIMFMLVVLATTVDTFTSDRALDAMNAAASNKASRLIALAVRGCCARAACAGIHQELCGGRR</sequence>
<protein>
    <recommendedName>
        <fullName>Alpha-conotoxin-like Lt1.2</fullName>
    </recommendedName>
    <alternativeName>
        <fullName>Lt1b</fullName>
    </alternativeName>
</protein>
<proteinExistence type="inferred from homology"/>
<name>CA12_CONLT</name>
<comment type="function">
    <text evidence="4">Alpha-conotoxins act on postsynaptic membranes, they bind to the nicotinic acetylcholine receptors (nAChR) and thus inhibit them (By similarity). Has a distinct nAChR binding mode from other alpha-conotoxins, due to a different three residue motif (Ala-Xaa-Ala instead of the conserved Ser-Xaa-Pro motif) (By similarity).</text>
</comment>
<comment type="subcellular location">
    <subcellularLocation>
        <location evidence="7">Secreted</location>
    </subcellularLocation>
</comment>
<comment type="tissue specificity">
    <text evidence="7">Expressed by the venom duct.</text>
</comment>
<comment type="domain">
    <text evidence="6">The cysteine framework is I (CC-C-C). Alpha4/7 pattern.</text>
</comment>
<comment type="similarity">
    <text evidence="6">Belongs to the conotoxin A superfamily.</text>
</comment>
<comment type="caution">
    <text evidence="6">Conotoxins Lt1.1 and Lt1.2 are the same protein. They possess a different name due to their different precursors.</text>
</comment>
<dbReference type="EMBL" id="DQ345365">
    <property type="protein sequence ID" value="ABC74973.1"/>
    <property type="molecule type" value="mRNA"/>
</dbReference>
<dbReference type="ConoServer" id="544">
    <property type="toxin name" value="Lt1.2 precursor"/>
</dbReference>
<dbReference type="GO" id="GO:0005576">
    <property type="term" value="C:extracellular region"/>
    <property type="evidence" value="ECO:0007669"/>
    <property type="project" value="UniProtKB-SubCell"/>
</dbReference>
<dbReference type="GO" id="GO:0035792">
    <property type="term" value="C:host cell postsynaptic membrane"/>
    <property type="evidence" value="ECO:0007669"/>
    <property type="project" value="UniProtKB-KW"/>
</dbReference>
<dbReference type="GO" id="GO:0030550">
    <property type="term" value="F:acetylcholine receptor inhibitor activity"/>
    <property type="evidence" value="ECO:0007669"/>
    <property type="project" value="UniProtKB-KW"/>
</dbReference>
<dbReference type="GO" id="GO:0099106">
    <property type="term" value="F:ion channel regulator activity"/>
    <property type="evidence" value="ECO:0007669"/>
    <property type="project" value="UniProtKB-KW"/>
</dbReference>
<dbReference type="GO" id="GO:0090729">
    <property type="term" value="F:toxin activity"/>
    <property type="evidence" value="ECO:0007669"/>
    <property type="project" value="UniProtKB-KW"/>
</dbReference>
<dbReference type="InterPro" id="IPR009958">
    <property type="entry name" value="Conotoxin_a-typ"/>
</dbReference>
<dbReference type="Pfam" id="PF07365">
    <property type="entry name" value="Toxin_8"/>
    <property type="match status" value="1"/>
</dbReference>
<evidence type="ECO:0000250" key="1"/>
<evidence type="ECO:0000250" key="2">
    <source>
        <dbReference type="UniProtKB" id="P56636"/>
    </source>
</evidence>
<evidence type="ECO:0000250" key="3">
    <source>
        <dbReference type="UniProtKB" id="P85886"/>
    </source>
</evidence>
<evidence type="ECO:0000250" key="4">
    <source>
        <dbReference type="UniProtKB" id="Q2I2R8"/>
    </source>
</evidence>
<evidence type="ECO:0000255" key="5"/>
<evidence type="ECO:0000305" key="6"/>
<evidence type="ECO:0000305" key="7">
    <source>
    </source>
</evidence>
<feature type="signal peptide" evidence="5">
    <location>
        <begin position="1"/>
        <end position="21"/>
    </location>
</feature>
<feature type="propeptide" id="PRO_0000315419" evidence="1">
    <location>
        <begin position="22"/>
        <end position="48"/>
    </location>
</feature>
<feature type="peptide" id="PRO_0000315420" description="Alpha-conotoxin-like Lt1.2">
    <location>
        <begin position="49"/>
        <end position="65"/>
    </location>
</feature>
<feature type="region of interest" description="Lacks the Ser-Xaa-Pro motif that is crucial for potent interaction with nAChR" evidence="4">
    <location>
        <begin position="52"/>
        <end position="54"/>
    </location>
</feature>
<feature type="modified residue" description="Glycine amide" evidence="3">
    <location>
        <position position="65"/>
    </location>
</feature>
<feature type="disulfide bond" evidence="2">
    <location>
        <begin position="50"/>
        <end position="56"/>
    </location>
</feature>
<feature type="disulfide bond" evidence="2">
    <location>
        <begin position="51"/>
        <end position="64"/>
    </location>
</feature>
<accession>Q2I2R7</accession>
<keyword id="KW-0008">Acetylcholine receptor inhibiting toxin</keyword>
<keyword id="KW-0027">Amidation</keyword>
<keyword id="KW-1015">Disulfide bond</keyword>
<keyword id="KW-0872">Ion channel impairing toxin</keyword>
<keyword id="KW-0528">Neurotoxin</keyword>
<keyword id="KW-0629">Postsynaptic neurotoxin</keyword>
<keyword id="KW-0964">Secreted</keyword>
<keyword id="KW-0732">Signal</keyword>
<keyword id="KW-0800">Toxin</keyword>
<organism>
    <name type="scientific">Conus litteratus</name>
    <name type="common">Lettered cone</name>
    <dbReference type="NCBI Taxonomy" id="89445"/>
    <lineage>
        <taxon>Eukaryota</taxon>
        <taxon>Metazoa</taxon>
        <taxon>Spiralia</taxon>
        <taxon>Lophotrochozoa</taxon>
        <taxon>Mollusca</taxon>
        <taxon>Gastropoda</taxon>
        <taxon>Caenogastropoda</taxon>
        <taxon>Neogastropoda</taxon>
        <taxon>Conoidea</taxon>
        <taxon>Conidae</taxon>
        <taxon>Conus</taxon>
        <taxon>Elisaconus</taxon>
    </lineage>
</organism>